<comment type="function">
    <text evidence="1 6 7 9 10 11 12 13 14 15 16 17">Transcription factor that is involved in embryonic development, establishment of tissue-specific gene expression and regulation of gene expression in differentiated tissues. Is thought to act as a 'pioneer' factor opening the compacted chromatin for other proteins through interactions with nucleosomal core histones and thereby replacing linker histones at target enhancer and/or promoter sites. Binds DNA with the consensus sequence 5'-[AC]A[AT]T[AG]TT[GT][AG][CT]T[CT]-3' (By similarity). In embryonic development is required for notochord formation. Involved in the development of multiple endoderm-derived organ systems such as the liver, pancreas and lungs; Foxa1 and Foxa2 seem to have at least in part redundant roles. FOXA1 and FOXA2 are essential for hepatic specification. FOXA1 and FOXA2 are required for morphogenesis and cell differentiation during formation of the lung. FOXA1 and FOXA2 are involved in bile duct formation; they positively regulate the binding glucocorticoid receptor/NR3C1 to the IL6 promoter. FOXA1 and FOXA2 regulate multiple phases of midbrain dopaminergic neuron development; they regulate expression of NEUROG2 at the beginning of mDA neurogenesis and of NR4A2 and EN1 in immature mDA neurons. Modulates the transcriptional activity of nuclear hormone receptors; inhibits AR-mediated transcription from the LCN5 promoter. Binds to fibrinogen beta promoter and is involved in IL6-induced fibrinogen beta transcriptional activation. Originally described as a transcription activator for a number of liver genes such as AFP, albumin, tyrosine aminotransferase, PEPCK, etc. Interacts with the cis-acting regulatory regions of these genes. Involved in glucose homeostasis; regulates the expression of genes important for glucose sensing in pancreatic beta-cells and glucose homeostasis. In pancreatic beta cells activates transcription of potassium channel subunits KCNJ11 and ABCC8. Involved in regulation of fat metabolism; activates transcriptional programs of lipid metabolism and ketogenesis at low insulin state. Involved in transcriptional regulation of MUC2 in the intestine.</text>
</comment>
<comment type="subunit">
    <text evidence="2 3 8">Binds DNA as a monomer. Binds TLE1 (By similarity). Interacts with FOXA1 and FOXA3 (By similarity). Interacts with PRKDC (By similarity). Interacts with AKT1 (PubMed:14500912). Interacts with TET1; this interaction may recruit TET1 to specific genomic loci to mediate their demethylation (By similarity).</text>
</comment>
<comment type="interaction">
    <interactant intactId="EBI-2893341">
        <id>P35583</id>
    </interactant>
    <interactant intactId="EBI-298954">
        <id>Q61221</id>
        <label>Hif1a</label>
    </interactant>
    <organismsDiffer>false</organismsDiffer>
    <experiments>5</experiments>
</comment>
<comment type="subcellular location">
    <subcellularLocation>
        <location evidence="4 9">Nucleus</location>
    </subcellularLocation>
    <subcellularLocation>
        <location evidence="9">Cytoplasm</location>
    </subcellularLocation>
    <text>Shuttles between the nucleus and cytoplasm in a CRM1-dependent manner; in response to insulin signaling via AKT1 is exported from the nucleus.</text>
</comment>
<comment type="tissue specificity">
    <text evidence="12">Restricted mainly to endoderm-derived tissues (lung, liver, stomach, and small intestine). Expressed in epididymis with region-specific expression pattern: no expression is observed in initial segment, low expression in proximal caput, gradiently higher levels of expression in middle and distal caput and highest level in corpus and cauda (at protein level).</text>
</comment>
<comment type="developmental stage">
    <text>Most abundant in midgestation embryos (day 9.5).</text>
</comment>
<comment type="PTM">
    <text evidence="1">Phosphorylation on Thr-156 abolishes binding to target promoters and subsequent transcription activation upon insulin stimulation.</text>
</comment>
<comment type="disruption phenotype">
    <text evidence="6 17">Embryonic lethal; absence of organized node and notochord formation, which leads to secondary defects in dorsal-ventral patterning of the neural tube. Mice deficient for Fox1a and deficient for Foxa2 in the endoderm from 8.5 dpc onwards do not show hepatic bud formation. Mice deficient for Fox1a and deficient for Foxa2 in the midbrain from 10.5 dpc onwards show almost complete loss of mDA neurons. Mice deficient for Fox1a and deficient for Foxa2 in the embryonic liver show hyperplasia of the biliary tree due to at least in part activation of IL-6 expression, a proliferative signal for cholangiocytes. Mice deficient for Fox2a in pancreatic beta cell show hypoglycemia and disorganized islets arrangements.</text>
</comment>
<accession>P35583</accession>
<accession>A2AR89</accession>
<accession>Q60602</accession>
<sequence>MLGAVKMEGHEPSDWSSYYAEPEGYSSVSNMNAGLGMNGMNTYMSMSAAAMGGGSGNMSAGSMNMSSYVGAGMSPSLAGMSPGAGAMAGMSGSAGAAGVAGMGPHLSPSLSPLGGQAAGAMGGLAPYANMNSMSPMYGQAGLSRARDPKTYRRSYTHAKPPYSYISLITMAIQQSPNKMLTLSEIYQWIMDLFPFYRQNQQRWQNSIRHSLSFNDCFLKVPRSPDKPGKGSFWTLHPDSGNMFENGCYLRRQKRFKCEKQLALKEAAGAASSGGKKTAPGSQASQAQLGEAAGSASETPAGTESPHSSASPCQEHKRGGLSELKGAPASALSPPEPAPSPGQQQQAAAHLLGPPHHPGLPPEAHLKPEHHYAFNHPFSINNLMSSEQQHHHSHHHHQPHKMDLKAYEQVMHYPGGYGSPMPGSLAMGPVTNKAGLDASPLAADTSYYQGVYSRPIMNSS</sequence>
<gene>
    <name type="primary">Foxa2</name>
    <name type="synonym">Hnf3b</name>
    <name type="synonym">Tcf-3b</name>
    <name type="synonym">Tcf3b</name>
</gene>
<protein>
    <recommendedName>
        <fullName>Hepatocyte nuclear factor 3-beta</fullName>
        <shortName>HNF-3-beta</shortName>
        <shortName>HNF-3B</shortName>
    </recommendedName>
    <alternativeName>
        <fullName>Forkhead box protein A2</fullName>
    </alternativeName>
</protein>
<reference key="1">
    <citation type="journal article" date="1994" name="Genomics">
        <title>The HNF-3 gene family of transcription factors in mice: gene structure, cDNA sequence, and mRNA distribution.</title>
        <authorList>
            <person name="Kaestner K."/>
            <person name="Hiemisch H."/>
            <person name="Luckow B."/>
            <person name="Schuetz G."/>
        </authorList>
    </citation>
    <scope>NUCLEOTIDE SEQUENCE [MRNA]</scope>
    <source>
        <tissue>Liver</tissue>
    </source>
</reference>
<reference key="2">
    <citation type="journal article" date="1993" name="Development">
        <title>Differential expression of multiple fork head related genes during gastrulation and axial pattern formation in the mouse embryo.</title>
        <authorList>
            <person name="Sasaki H."/>
            <person name="Hogan B.L."/>
        </authorList>
    </citation>
    <scope>NUCLEOTIDE SEQUENCE [MRNA]</scope>
</reference>
<reference key="3">
    <citation type="journal article" date="2009" name="PLoS Biol.">
        <title>Lineage-specific biology revealed by a finished genome assembly of the mouse.</title>
        <authorList>
            <person name="Church D.M."/>
            <person name="Goodstadt L."/>
            <person name="Hillier L.W."/>
            <person name="Zody M.C."/>
            <person name="Goldstein S."/>
            <person name="She X."/>
            <person name="Bult C.J."/>
            <person name="Agarwala R."/>
            <person name="Cherry J.L."/>
            <person name="DiCuccio M."/>
            <person name="Hlavina W."/>
            <person name="Kapustin Y."/>
            <person name="Meric P."/>
            <person name="Maglott D."/>
            <person name="Birtle Z."/>
            <person name="Marques A.C."/>
            <person name="Graves T."/>
            <person name="Zhou S."/>
            <person name="Teague B."/>
            <person name="Potamousis K."/>
            <person name="Churas C."/>
            <person name="Place M."/>
            <person name="Herschleb J."/>
            <person name="Runnheim R."/>
            <person name="Forrest D."/>
            <person name="Amos-Landgraf J."/>
            <person name="Schwartz D.C."/>
            <person name="Cheng Z."/>
            <person name="Lindblad-Toh K."/>
            <person name="Eichler E.E."/>
            <person name="Ponting C.P."/>
        </authorList>
    </citation>
    <scope>NUCLEOTIDE SEQUENCE [LARGE SCALE GENOMIC DNA]</scope>
    <source>
        <strain>C57BL/6J</strain>
    </source>
</reference>
<reference key="4">
    <citation type="journal article" date="1993" name="Development">
        <title>The formation and maintenance of the definitive endoderm lineage in the mouse: involvement of HNF3/forkhead proteins.</title>
        <authorList>
            <person name="Ang S.-L."/>
            <person name="Wierda A."/>
            <person name="Wong D."/>
            <person name="Stevens K.A."/>
            <person name="Cascio S."/>
            <person name="Rossant J."/>
            <person name="Zaret K.S."/>
        </authorList>
    </citation>
    <scope>NUCLEOTIDE SEQUENCE [MRNA] OF 201-459</scope>
</reference>
<reference key="5">
    <citation type="journal article" date="1994" name="Cell">
        <title>HNF-3 beta is essential for node and notochord formation in mouse development.</title>
        <authorList>
            <person name="Ang S.L."/>
            <person name="Rossant J."/>
        </authorList>
    </citation>
    <scope>DISRUPTION PHENOTYPE</scope>
    <scope>FUNCTION IN NOTOCHORD FORMATION</scope>
</reference>
<reference key="6">
    <citation type="journal article" date="2001" name="Genes Dev.">
        <title>Tissue-specific deletion of Foxa2 in pancreatic beta cells results in hyperinsulinemic hypoglycemia.</title>
        <authorList>
            <person name="Sund N.J."/>
            <person name="Vatamaniuk M.Z."/>
            <person name="Casey M."/>
            <person name="Ang S.L."/>
            <person name="Magnuson M.A."/>
            <person name="Stoffers D.A."/>
            <person name="Matschinsky F.M."/>
            <person name="Kaestner K.H."/>
        </authorList>
    </citation>
    <scope>DISRUPTION PHENOTYPE</scope>
    <scope>FUNCTION</scope>
</reference>
<reference key="7">
    <citation type="journal article" date="2002" name="J. Biol. Chem.">
        <title>Foxa2 (HNF3beta) controls multiple genes implicated in metabolism-secretion coupling of glucose-induced insulin release.</title>
        <authorList>
            <person name="Wang H."/>
            <person name="Gauthier B.R."/>
            <person name="Hagenfeldt-Johansson K.A."/>
            <person name="Iezzi M."/>
            <person name="Wollheim C.B."/>
        </authorList>
    </citation>
    <scope>FUNCTION IN REGULATION OF GLUCOSE HOMEOSTASIS</scope>
</reference>
<reference key="8">
    <citation type="journal article" date="2003" name="Proc. Natl. Acad. Sci. U.S.A.">
        <title>Insulin regulates the activity of forkhead transcription factor Hnf-3beta/Foxa-2 by Akt-mediated phosphorylation and nuclear/cytosolic localization.</title>
        <authorList>
            <person name="Wolfrum C."/>
            <person name="Besser D."/>
            <person name="Luca E."/>
            <person name="Stoffel M."/>
        </authorList>
    </citation>
    <scope>INTERACTION WITH AKT1</scope>
</reference>
<reference key="9">
    <citation type="journal article" date="2004" name="Nature">
        <title>Foxa2 regulates lipid metabolism and ketogenesis in the liver during fasting and in diabetes.</title>
        <authorList>
            <person name="Wolfrum C."/>
            <person name="Asilmaz E."/>
            <person name="Luca E."/>
            <person name="Friedman J.M."/>
            <person name="Stoffel M."/>
        </authorList>
    </citation>
    <scope>PHOSPHORYLATION AT THR-156</scope>
    <scope>SUBCELLULAR LOCATION</scope>
    <scope>FUNCTION IN REGULATION OF LIPID METABOLISM AND KETOGENESIS</scope>
</reference>
<reference key="10">
    <citation type="journal article" date="2005" name="J. Biol. Chem.">
        <title>Compensatory roles of Foxa1 and Foxa2 during lung morphogenesis.</title>
        <authorList>
            <person name="Wan H."/>
            <person name="Dingle S."/>
            <person name="Xu Y."/>
            <person name="Besnard V."/>
            <person name="Kaestner K.H."/>
            <person name="Ang S.L."/>
            <person name="Wert S."/>
            <person name="Stahlman M.T."/>
            <person name="Whitsett J.A."/>
        </authorList>
    </citation>
    <scope>FUNCTION IN LUNG DEVELOPMENT</scope>
</reference>
<reference key="11">
    <citation type="journal article" date="2005" name="Nature">
        <title>The initiation of liver development is dependent on Foxa transcription factors.</title>
        <authorList>
            <person name="Lee C.S."/>
            <person name="Friedman J.R."/>
            <person name="Fulmer J.T."/>
            <person name="Kaestner K.H."/>
        </authorList>
    </citation>
    <scope>FUNCTION IN LIVER DEVELOPMENT</scope>
</reference>
<reference key="12">
    <citation type="journal article" date="2006" name="Mol. Endocrinol.">
        <title>The role of forkhead box A2 to restrict androgen-regulated gene expression of lipocalin 5 in the mouse epididymis.</title>
        <authorList>
            <person name="Yu X."/>
            <person name="Suzuki K."/>
            <person name="Wang Y."/>
            <person name="Gupta A."/>
            <person name="Jin R."/>
            <person name="Orgebin-Crist M.C."/>
            <person name="Matusik R."/>
        </authorList>
    </citation>
    <scope>FUNCTION</scope>
    <scope>TISSUE SPECIFICITY</scope>
</reference>
<reference key="13">
    <citation type="journal article" date="2007" name="Development">
        <title>Foxa1 and Foxa2 regulate multiple phases of midbrain dopaminergic neuron development in a dosage-dependent manner.</title>
        <authorList>
            <person name="Ferri A.L."/>
            <person name="Lin W."/>
            <person name="Mavromatakis Y.E."/>
            <person name="Wang J.C."/>
            <person name="Sasaki H."/>
            <person name="Whitsett J.A."/>
            <person name="Ang S.L."/>
        </authorList>
    </citation>
    <scope>FUNCTION IN NEURON DEVELOPMENT</scope>
</reference>
<reference key="14">
    <citation type="journal article" date="2007" name="Proc. Natl. Acad. Sci. U.S.A.">
        <title>Large-scale phosphorylation analysis of mouse liver.</title>
        <authorList>
            <person name="Villen J."/>
            <person name="Beausoleil S.A."/>
            <person name="Gerber S.A."/>
            <person name="Gygi S.P."/>
        </authorList>
    </citation>
    <scope>IDENTIFICATION BY MASS SPECTROMETRY [LARGE SCALE ANALYSIS]</scope>
    <source>
        <tissue>Liver</tissue>
    </source>
</reference>
<reference key="15">
    <citation type="journal article" date="2008" name="Biochem. Biophys. Res. Commun.">
        <title>Forkhead box transcription factors Foxa1 and Foxa2 are important regulators of Muc2 mucin expression in intestinal epithelial cells.</title>
        <authorList>
            <person name="van der Sluis M."/>
            <person name="Vincent A."/>
            <person name="Bouma J."/>
            <person name="Korteland-Van Male A."/>
            <person name="van Goudoever J.B."/>
            <person name="Renes I.B."/>
            <person name="Van Seuningen I."/>
        </authorList>
    </citation>
    <scope>FUNCTION</scope>
</reference>
<reference key="16">
    <citation type="journal article" date="2008" name="Genes Dev.">
        <title>Dynamic regulation of Pdx1 enhancers by Foxa1 and Foxa2 is essential for pancreas development.</title>
        <authorList>
            <person name="Gao N."/>
            <person name="LeLay J."/>
            <person name="Vatamaniuk M.Z."/>
            <person name="Rieck S."/>
            <person name="Friedman J.R."/>
            <person name="Kaestner K.H."/>
        </authorList>
    </citation>
    <scope>FUNCTION IN PANCREAS DEVELOPMENT</scope>
</reference>
<reference key="17">
    <citation type="journal article" date="2009" name="J. Clin. Invest.">
        <title>Foxa1 and Foxa2 regulate bile duct development in mice.</title>
        <authorList>
            <person name="Li Z."/>
            <person name="White P."/>
            <person name="Tuteja G."/>
            <person name="Rubins N."/>
            <person name="Sackett S."/>
            <person name="Kaestner K.H."/>
        </authorList>
    </citation>
    <scope>FUNCTION IN BILE DUCT DEVELOPMENT</scope>
</reference>
<reference key="18">
    <citation type="journal article" date="2010" name="Cell">
        <title>A tissue-specific atlas of mouse protein phosphorylation and expression.</title>
        <authorList>
            <person name="Huttlin E.L."/>
            <person name="Jedrychowski M.P."/>
            <person name="Elias J.E."/>
            <person name="Goswami T."/>
            <person name="Rad R."/>
            <person name="Beausoleil S.A."/>
            <person name="Villen J."/>
            <person name="Haas W."/>
            <person name="Sowa M.E."/>
            <person name="Gygi S.P."/>
        </authorList>
    </citation>
    <scope>PHOSPHORYLATION [LARGE SCALE ANALYSIS] AT THR-302</scope>
    <scope>IDENTIFICATION BY MASS SPECTROMETRY [LARGE SCALE ANALYSIS]</scope>
    <source>
        <tissue>Liver</tissue>
        <tissue>Lung</tissue>
        <tissue>Pancreas</tissue>
    </source>
</reference>
<evidence type="ECO:0000250" key="1"/>
<evidence type="ECO:0000250" key="2">
    <source>
        <dbReference type="UniProtKB" id="P32182"/>
    </source>
</evidence>
<evidence type="ECO:0000250" key="3">
    <source>
        <dbReference type="UniProtKB" id="Q9Y261"/>
    </source>
</evidence>
<evidence type="ECO:0000255" key="4">
    <source>
        <dbReference type="PROSITE-ProRule" id="PRU00089"/>
    </source>
</evidence>
<evidence type="ECO:0000256" key="5">
    <source>
        <dbReference type="SAM" id="MobiDB-lite"/>
    </source>
</evidence>
<evidence type="ECO:0000269" key="6">
    <source>
    </source>
</evidence>
<evidence type="ECO:0000269" key="7">
    <source>
    </source>
</evidence>
<evidence type="ECO:0000269" key="8">
    <source>
    </source>
</evidence>
<evidence type="ECO:0000269" key="9">
    <source>
    </source>
</evidence>
<evidence type="ECO:0000269" key="10">
    <source>
    </source>
</evidence>
<evidence type="ECO:0000269" key="11">
    <source>
    </source>
</evidence>
<evidence type="ECO:0000269" key="12">
    <source>
    </source>
</evidence>
<evidence type="ECO:0000269" key="13">
    <source>
    </source>
</evidence>
<evidence type="ECO:0000269" key="14">
    <source>
    </source>
</evidence>
<evidence type="ECO:0000269" key="15">
    <source>
    </source>
</evidence>
<evidence type="ECO:0000269" key="16">
    <source>
    </source>
</evidence>
<evidence type="ECO:0000269" key="17">
    <source>
    </source>
</evidence>
<evidence type="ECO:0000305" key="18"/>
<evidence type="ECO:0007744" key="19">
    <source>
    </source>
</evidence>
<proteinExistence type="evidence at protein level"/>
<organism>
    <name type="scientific">Mus musculus</name>
    <name type="common">Mouse</name>
    <dbReference type="NCBI Taxonomy" id="10090"/>
    <lineage>
        <taxon>Eukaryota</taxon>
        <taxon>Metazoa</taxon>
        <taxon>Chordata</taxon>
        <taxon>Craniata</taxon>
        <taxon>Vertebrata</taxon>
        <taxon>Euteleostomi</taxon>
        <taxon>Mammalia</taxon>
        <taxon>Eutheria</taxon>
        <taxon>Euarchontoglires</taxon>
        <taxon>Glires</taxon>
        <taxon>Rodentia</taxon>
        <taxon>Myomorpha</taxon>
        <taxon>Muroidea</taxon>
        <taxon>Muridae</taxon>
        <taxon>Murinae</taxon>
        <taxon>Mus</taxon>
        <taxon>Mus</taxon>
    </lineage>
</organism>
<dbReference type="EMBL" id="X74937">
    <property type="protein sequence ID" value="CAA52891.1"/>
    <property type="molecule type" value="mRNA"/>
</dbReference>
<dbReference type="EMBL" id="L10409">
    <property type="protein sequence ID" value="AAA03161.1"/>
    <property type="molecule type" value="mRNA"/>
</dbReference>
<dbReference type="EMBL" id="AL845297">
    <property type="status" value="NOT_ANNOTATED_CDS"/>
    <property type="molecule type" value="Genomic_DNA"/>
</dbReference>
<dbReference type="EMBL" id="U04197">
    <property type="protein sequence ID" value="AAA03606.1"/>
    <property type="molecule type" value="mRNA"/>
</dbReference>
<dbReference type="CCDS" id="CCDS16836.1"/>
<dbReference type="PIR" id="B54258">
    <property type="entry name" value="B54258"/>
</dbReference>
<dbReference type="RefSeq" id="NP_001277994.1">
    <property type="nucleotide sequence ID" value="NM_001291065.1"/>
</dbReference>
<dbReference type="RefSeq" id="NP_034576.2">
    <property type="nucleotide sequence ID" value="NM_010446.3"/>
</dbReference>
<dbReference type="SMR" id="P35583"/>
<dbReference type="BioGRID" id="200352">
    <property type="interactions" value="1"/>
</dbReference>
<dbReference type="FunCoup" id="P35583">
    <property type="interactions" value="563"/>
</dbReference>
<dbReference type="IntAct" id="P35583">
    <property type="interactions" value="7"/>
</dbReference>
<dbReference type="STRING" id="10090.ENSMUSP00000105590"/>
<dbReference type="iPTMnet" id="P35583"/>
<dbReference type="PhosphoSitePlus" id="P35583"/>
<dbReference type="PaxDb" id="10090-ENSMUSP00000045918"/>
<dbReference type="ProteomicsDB" id="271591"/>
<dbReference type="Antibodypedia" id="3772">
    <property type="antibodies" value="873 antibodies from 47 providers"/>
</dbReference>
<dbReference type="DNASU" id="15376"/>
<dbReference type="Ensembl" id="ENSMUST00000047315.10">
    <property type="protein sequence ID" value="ENSMUSP00000045918.4"/>
    <property type="gene ID" value="ENSMUSG00000037025.12"/>
</dbReference>
<dbReference type="GeneID" id="15376"/>
<dbReference type="KEGG" id="mmu:15376"/>
<dbReference type="UCSC" id="uc008mtb.2">
    <property type="organism name" value="mouse"/>
</dbReference>
<dbReference type="AGR" id="MGI:1347476"/>
<dbReference type="CTD" id="3170"/>
<dbReference type="MGI" id="MGI:1347476">
    <property type="gene designation" value="Foxa2"/>
</dbReference>
<dbReference type="VEuPathDB" id="HostDB:ENSMUSG00000037025"/>
<dbReference type="eggNOG" id="KOG3563">
    <property type="taxonomic scope" value="Eukaryota"/>
</dbReference>
<dbReference type="GeneTree" id="ENSGT00940000155999"/>
<dbReference type="HOGENOM" id="CLU_027910_4_1_1"/>
<dbReference type="InParanoid" id="P35583"/>
<dbReference type="OrthoDB" id="5954824at2759"/>
<dbReference type="TreeFam" id="TF316127"/>
<dbReference type="BioGRID-ORCS" id="15376">
    <property type="hits" value="2 hits in 79 CRISPR screens"/>
</dbReference>
<dbReference type="ChiTaRS" id="Foxa2">
    <property type="organism name" value="mouse"/>
</dbReference>
<dbReference type="PRO" id="PR:P35583"/>
<dbReference type="Proteomes" id="UP000000589">
    <property type="component" value="Chromosome 2"/>
</dbReference>
<dbReference type="RNAct" id="P35583">
    <property type="molecule type" value="protein"/>
</dbReference>
<dbReference type="Bgee" id="ENSMUSG00000037025">
    <property type="expression patterns" value="Expressed in digestive tract diverticulum and 149 other cell types or tissues"/>
</dbReference>
<dbReference type="ExpressionAtlas" id="P35583">
    <property type="expression patterns" value="baseline and differential"/>
</dbReference>
<dbReference type="GO" id="GO:0005737">
    <property type="term" value="C:cytoplasm"/>
    <property type="evidence" value="ECO:0007669"/>
    <property type="project" value="UniProtKB-SubCell"/>
</dbReference>
<dbReference type="GO" id="GO:0005654">
    <property type="term" value="C:nucleoplasm"/>
    <property type="evidence" value="ECO:0000304"/>
    <property type="project" value="Reactome"/>
</dbReference>
<dbReference type="GO" id="GO:0005634">
    <property type="term" value="C:nucleus"/>
    <property type="evidence" value="ECO:0000314"/>
    <property type="project" value="MGI"/>
</dbReference>
<dbReference type="GO" id="GO:0005667">
    <property type="term" value="C:transcription regulator complex"/>
    <property type="evidence" value="ECO:0000314"/>
    <property type="project" value="MGI"/>
</dbReference>
<dbReference type="GO" id="GO:0003682">
    <property type="term" value="F:chromatin binding"/>
    <property type="evidence" value="ECO:0000314"/>
    <property type="project" value="MGI"/>
</dbReference>
<dbReference type="GO" id="GO:0001228">
    <property type="term" value="F:DNA-binding transcription activator activity, RNA polymerase II-specific"/>
    <property type="evidence" value="ECO:0000314"/>
    <property type="project" value="ARUK-UCL"/>
</dbReference>
<dbReference type="GO" id="GO:0003700">
    <property type="term" value="F:DNA-binding transcription factor activity"/>
    <property type="evidence" value="ECO:0000314"/>
    <property type="project" value="MGI"/>
</dbReference>
<dbReference type="GO" id="GO:0000981">
    <property type="term" value="F:DNA-binding transcription factor activity, RNA polymerase II-specific"/>
    <property type="evidence" value="ECO:0000314"/>
    <property type="project" value="MGI"/>
</dbReference>
<dbReference type="GO" id="GO:0001227">
    <property type="term" value="F:DNA-binding transcription repressor activity, RNA polymerase II-specific"/>
    <property type="evidence" value="ECO:0000314"/>
    <property type="project" value="BHF-UCL"/>
</dbReference>
<dbReference type="GO" id="GO:0003690">
    <property type="term" value="F:double-stranded DNA binding"/>
    <property type="evidence" value="ECO:0000316"/>
    <property type="project" value="MGI"/>
</dbReference>
<dbReference type="GO" id="GO:0019904">
    <property type="term" value="F:protein domain specific binding"/>
    <property type="evidence" value="ECO:0007669"/>
    <property type="project" value="InterPro"/>
</dbReference>
<dbReference type="GO" id="GO:0000978">
    <property type="term" value="F:RNA polymerase II cis-regulatory region sequence-specific DNA binding"/>
    <property type="evidence" value="ECO:0000314"/>
    <property type="project" value="MGI"/>
</dbReference>
<dbReference type="GO" id="GO:0016251">
    <property type="term" value="F:RNA polymerase II general transcription initiation factor activity"/>
    <property type="evidence" value="ECO:0000304"/>
    <property type="project" value="MGI"/>
</dbReference>
<dbReference type="GO" id="GO:0043565">
    <property type="term" value="F:sequence-specific DNA binding"/>
    <property type="evidence" value="ECO:0000314"/>
    <property type="project" value="MGI"/>
</dbReference>
<dbReference type="GO" id="GO:0008344">
    <property type="term" value="P:adult locomotory behavior"/>
    <property type="evidence" value="ECO:0000315"/>
    <property type="project" value="MGI"/>
</dbReference>
<dbReference type="GO" id="GO:0048646">
    <property type="term" value="P:anatomical structure formation involved in morphogenesis"/>
    <property type="evidence" value="ECO:0000316"/>
    <property type="project" value="MGI"/>
</dbReference>
<dbReference type="GO" id="GO:0009653">
    <property type="term" value="P:anatomical structure morphogenesis"/>
    <property type="evidence" value="ECO:0000316"/>
    <property type="project" value="MGI"/>
</dbReference>
<dbReference type="GO" id="GO:0009952">
    <property type="term" value="P:anterior/posterior pattern specification"/>
    <property type="evidence" value="ECO:0000316"/>
    <property type="project" value="MGI"/>
</dbReference>
<dbReference type="GO" id="GO:0048468">
    <property type="term" value="P:cell development"/>
    <property type="evidence" value="ECO:0000315"/>
    <property type="project" value="MGI"/>
</dbReference>
<dbReference type="GO" id="GO:0030154">
    <property type="term" value="P:cell differentiation"/>
    <property type="evidence" value="ECO:0000304"/>
    <property type="project" value="MGI"/>
</dbReference>
<dbReference type="GO" id="GO:0021533">
    <property type="term" value="P:cell differentiation in hindbrain"/>
    <property type="evidence" value="ECO:0000315"/>
    <property type="project" value="MGI"/>
</dbReference>
<dbReference type="GO" id="GO:0001708">
    <property type="term" value="P:cell fate specification"/>
    <property type="evidence" value="ECO:0000314"/>
    <property type="project" value="MGI"/>
</dbReference>
<dbReference type="GO" id="GO:0071276">
    <property type="term" value="P:cellular response to cadmium ion"/>
    <property type="evidence" value="ECO:0000314"/>
    <property type="project" value="MGI"/>
</dbReference>
<dbReference type="GO" id="GO:0006325">
    <property type="term" value="P:chromatin organization"/>
    <property type="evidence" value="ECO:0007669"/>
    <property type="project" value="UniProtKB-KW"/>
</dbReference>
<dbReference type="GO" id="GO:0061448">
    <property type="term" value="P:connective tissue development"/>
    <property type="evidence" value="ECO:0000316"/>
    <property type="project" value="MGI"/>
</dbReference>
<dbReference type="GO" id="GO:0071542">
    <property type="term" value="P:dopaminergic neuron differentiation"/>
    <property type="evidence" value="ECO:0000315"/>
    <property type="project" value="MGI"/>
</dbReference>
<dbReference type="GO" id="GO:0021904">
    <property type="term" value="P:dorsal/ventral neural tube patterning"/>
    <property type="evidence" value="ECO:0000314"/>
    <property type="project" value="MGI"/>
</dbReference>
<dbReference type="GO" id="GO:0009953">
    <property type="term" value="P:dorsal/ventral pattern formation"/>
    <property type="evidence" value="ECO:0000316"/>
    <property type="project" value="MGI"/>
</dbReference>
<dbReference type="GO" id="GO:0001705">
    <property type="term" value="P:ectoderm formation"/>
    <property type="evidence" value="ECO:0000316"/>
    <property type="project" value="MGI"/>
</dbReference>
<dbReference type="GO" id="GO:0031018">
    <property type="term" value="P:endocrine pancreas development"/>
    <property type="evidence" value="ECO:0000315"/>
    <property type="project" value="MGI"/>
</dbReference>
<dbReference type="GO" id="GO:0060441">
    <property type="term" value="P:epithelial tube branching involved in lung morphogenesis"/>
    <property type="evidence" value="ECO:0000316"/>
    <property type="project" value="MGI"/>
</dbReference>
<dbReference type="GO" id="GO:0010467">
    <property type="term" value="P:gene expression"/>
    <property type="evidence" value="ECO:0000315"/>
    <property type="project" value="MGI"/>
</dbReference>
<dbReference type="GO" id="GO:0010255">
    <property type="term" value="P:glucose mediated signaling pathway"/>
    <property type="evidence" value="ECO:0000314"/>
    <property type="project" value="BHF-UCL"/>
</dbReference>
<dbReference type="GO" id="GO:0001701">
    <property type="term" value="P:in utero embryonic development"/>
    <property type="evidence" value="ECO:0000315"/>
    <property type="project" value="MGI"/>
</dbReference>
<dbReference type="GO" id="GO:0030324">
    <property type="term" value="P:lung development"/>
    <property type="evidence" value="ECO:0000316"/>
    <property type="project" value="MGI"/>
</dbReference>
<dbReference type="GO" id="GO:0060487">
    <property type="term" value="P:lung epithelial cell differentiation"/>
    <property type="evidence" value="ECO:0000316"/>
    <property type="project" value="MGI"/>
</dbReference>
<dbReference type="GO" id="GO:0048382">
    <property type="term" value="P:mesendoderm development"/>
    <property type="evidence" value="ECO:0000315"/>
    <property type="project" value="MGI"/>
</dbReference>
<dbReference type="GO" id="GO:0045665">
    <property type="term" value="P:negative regulation of neuron differentiation"/>
    <property type="evidence" value="ECO:0000316"/>
    <property type="project" value="MGI"/>
</dbReference>
<dbReference type="GO" id="GO:0000122">
    <property type="term" value="P:negative regulation of transcription by RNA polymerase II"/>
    <property type="evidence" value="ECO:0000314"/>
    <property type="project" value="BHF-UCL"/>
</dbReference>
<dbReference type="GO" id="GO:0030182">
    <property type="term" value="P:neuron differentiation"/>
    <property type="evidence" value="ECO:0000315"/>
    <property type="project" value="MGI"/>
</dbReference>
<dbReference type="GO" id="GO:0048665">
    <property type="term" value="P:neuron fate specification"/>
    <property type="evidence" value="ECO:0000315"/>
    <property type="project" value="MGI"/>
</dbReference>
<dbReference type="GO" id="GO:0007219">
    <property type="term" value="P:Notch signaling pathway"/>
    <property type="evidence" value="ECO:0000314"/>
    <property type="project" value="MGI"/>
</dbReference>
<dbReference type="GO" id="GO:0007389">
    <property type="term" value="P:pattern specification process"/>
    <property type="evidence" value="ECO:0000316"/>
    <property type="project" value="MGI"/>
</dbReference>
<dbReference type="GO" id="GO:0045893">
    <property type="term" value="P:positive regulation of DNA-templated transcription"/>
    <property type="evidence" value="ECO:0000315"/>
    <property type="project" value="UniProtKB"/>
</dbReference>
<dbReference type="GO" id="GO:1904340">
    <property type="term" value="P:positive regulation of dopaminergic neuron differentiation"/>
    <property type="evidence" value="ECO:0000315"/>
    <property type="project" value="MGI"/>
</dbReference>
<dbReference type="GO" id="GO:0040019">
    <property type="term" value="P:positive regulation of embryonic development"/>
    <property type="evidence" value="ECO:0000315"/>
    <property type="project" value="UniProtKB"/>
</dbReference>
<dbReference type="GO" id="GO:2000543">
    <property type="term" value="P:positive regulation of gastrulation"/>
    <property type="evidence" value="ECO:0000315"/>
    <property type="project" value="UniProtKB"/>
</dbReference>
<dbReference type="GO" id="GO:0045666">
    <property type="term" value="P:positive regulation of neuron differentiation"/>
    <property type="evidence" value="ECO:0000316"/>
    <property type="project" value="MGI"/>
</dbReference>
<dbReference type="GO" id="GO:0045880">
    <property type="term" value="P:positive regulation of smoothened signaling pathway"/>
    <property type="evidence" value="ECO:0000316"/>
    <property type="project" value="MGI"/>
</dbReference>
<dbReference type="GO" id="GO:0045944">
    <property type="term" value="P:positive regulation of transcription by RNA polymerase II"/>
    <property type="evidence" value="ECO:0000314"/>
    <property type="project" value="BHF-UCL"/>
</dbReference>
<dbReference type="GO" id="GO:0045945">
    <property type="term" value="P:positive regulation of transcription by RNA polymerase III"/>
    <property type="evidence" value="ECO:0000315"/>
    <property type="project" value="UniProtKB"/>
</dbReference>
<dbReference type="GO" id="GO:0090009">
    <property type="term" value="P:primitive streak formation"/>
    <property type="evidence" value="ECO:0000315"/>
    <property type="project" value="UniProtKB"/>
</dbReference>
<dbReference type="GO" id="GO:0006355">
    <property type="term" value="P:regulation of DNA-templated transcription"/>
    <property type="evidence" value="ECO:0000314"/>
    <property type="project" value="MGI"/>
</dbReference>
<dbReference type="GO" id="GO:0010468">
    <property type="term" value="P:regulation of gene expression"/>
    <property type="evidence" value="ECO:0000316"/>
    <property type="project" value="MGI"/>
</dbReference>
<dbReference type="GO" id="GO:0061178">
    <property type="term" value="P:regulation of insulin secretion involved in cellular response to glucose stimulus"/>
    <property type="evidence" value="ECO:0000314"/>
    <property type="project" value="BHF-UCL"/>
</dbReference>
<dbReference type="GO" id="GO:0019216">
    <property type="term" value="P:regulation of lipid metabolic process"/>
    <property type="evidence" value="ECO:0000314"/>
    <property type="project" value="MGI"/>
</dbReference>
<dbReference type="GO" id="GO:0019218">
    <property type="term" value="P:regulation of steroid metabolic process"/>
    <property type="evidence" value="ECO:0000314"/>
    <property type="project" value="MGI"/>
</dbReference>
<dbReference type="GO" id="GO:0070741">
    <property type="term" value="P:response to interleukin-6"/>
    <property type="evidence" value="ECO:0000304"/>
    <property type="project" value="UniProtKB"/>
</dbReference>
<dbReference type="GO" id="GO:0023019">
    <property type="term" value="P:signal transduction involved in regulation of gene expression"/>
    <property type="evidence" value="ECO:0000314"/>
    <property type="project" value="MGI"/>
</dbReference>
<dbReference type="GO" id="GO:0007224">
    <property type="term" value="P:smoothened signaling pathway"/>
    <property type="evidence" value="ECO:0000316"/>
    <property type="project" value="MGI"/>
</dbReference>
<dbReference type="GO" id="GO:0032525">
    <property type="term" value="P:somite rostral/caudal axis specification"/>
    <property type="evidence" value="ECO:0000315"/>
    <property type="project" value="MGI"/>
</dbReference>
<dbReference type="GO" id="GO:0006366">
    <property type="term" value="P:transcription by RNA polymerase II"/>
    <property type="evidence" value="ECO:0000314"/>
    <property type="project" value="MGI"/>
</dbReference>
<dbReference type="CDD" id="cd20039">
    <property type="entry name" value="FH_FOXA2"/>
    <property type="match status" value="1"/>
</dbReference>
<dbReference type="FunFam" id="1.10.10.10:FF:000042">
    <property type="entry name" value="hepatocyte nuclear factor 3-beta"/>
    <property type="match status" value="1"/>
</dbReference>
<dbReference type="Gene3D" id="1.10.10.10">
    <property type="entry name" value="Winged helix-like DNA-binding domain superfamily/Winged helix DNA-binding domain"/>
    <property type="match status" value="1"/>
</dbReference>
<dbReference type="InterPro" id="IPR013638">
    <property type="entry name" value="Fork-head_N"/>
</dbReference>
<dbReference type="InterPro" id="IPR001766">
    <property type="entry name" value="Fork_head_dom"/>
</dbReference>
<dbReference type="InterPro" id="IPR018533">
    <property type="entry name" value="Forkhead_box_C"/>
</dbReference>
<dbReference type="InterPro" id="IPR050211">
    <property type="entry name" value="FOX_domain-containing"/>
</dbReference>
<dbReference type="InterPro" id="IPR018122">
    <property type="entry name" value="TF_fork_head_CS_1"/>
</dbReference>
<dbReference type="InterPro" id="IPR030456">
    <property type="entry name" value="TF_fork_head_CS_2"/>
</dbReference>
<dbReference type="InterPro" id="IPR036388">
    <property type="entry name" value="WH-like_DNA-bd_sf"/>
</dbReference>
<dbReference type="InterPro" id="IPR036390">
    <property type="entry name" value="WH_DNA-bd_sf"/>
</dbReference>
<dbReference type="PANTHER" id="PTHR11829">
    <property type="entry name" value="FORKHEAD BOX PROTEIN"/>
    <property type="match status" value="1"/>
</dbReference>
<dbReference type="PANTHER" id="PTHR11829:SF167">
    <property type="entry name" value="HEPATOCYTE NUCLEAR FACTOR 3-BETA"/>
    <property type="match status" value="1"/>
</dbReference>
<dbReference type="Pfam" id="PF00250">
    <property type="entry name" value="Forkhead"/>
    <property type="match status" value="1"/>
</dbReference>
<dbReference type="Pfam" id="PF08430">
    <property type="entry name" value="Forkhead_N"/>
    <property type="match status" value="1"/>
</dbReference>
<dbReference type="Pfam" id="PF09354">
    <property type="entry name" value="HNF_C"/>
    <property type="match status" value="1"/>
</dbReference>
<dbReference type="PRINTS" id="PR00053">
    <property type="entry name" value="FORKHEAD"/>
</dbReference>
<dbReference type="SMART" id="SM00339">
    <property type="entry name" value="FH"/>
    <property type="match status" value="1"/>
</dbReference>
<dbReference type="SUPFAM" id="SSF46785">
    <property type="entry name" value="Winged helix' DNA-binding domain"/>
    <property type="match status" value="1"/>
</dbReference>
<dbReference type="PROSITE" id="PS00657">
    <property type="entry name" value="FORK_HEAD_1"/>
    <property type="match status" value="1"/>
</dbReference>
<dbReference type="PROSITE" id="PS00658">
    <property type="entry name" value="FORK_HEAD_2"/>
    <property type="match status" value="1"/>
</dbReference>
<dbReference type="PROSITE" id="PS50039">
    <property type="entry name" value="FORK_HEAD_3"/>
    <property type="match status" value="1"/>
</dbReference>
<feature type="chain" id="PRO_0000091796" description="Hepatocyte nuclear factor 3-beta">
    <location>
        <begin position="1"/>
        <end position="459"/>
    </location>
</feature>
<feature type="DNA-binding region" description="Fork-head" evidence="4">
    <location>
        <begin position="159"/>
        <end position="252"/>
    </location>
</feature>
<feature type="region of interest" description="Transactivation domain 1" evidence="1">
    <location>
        <begin position="14"/>
        <end position="93"/>
    </location>
</feature>
<feature type="region of interest" description="Disordered" evidence="5">
    <location>
        <begin position="268"/>
        <end position="366"/>
    </location>
</feature>
<feature type="region of interest" description="Transactivation domain 2" evidence="1">
    <location>
        <begin position="362"/>
        <end position="459"/>
    </location>
</feature>
<feature type="short sequence motif" description="Nuclear localization signal" evidence="1">
    <location>
        <begin position="106"/>
        <end position="113"/>
    </location>
</feature>
<feature type="compositionally biased region" description="Low complexity" evidence="5">
    <location>
        <begin position="268"/>
        <end position="281"/>
    </location>
</feature>
<feature type="compositionally biased region" description="Polar residues" evidence="5">
    <location>
        <begin position="295"/>
        <end position="311"/>
    </location>
</feature>
<feature type="compositionally biased region" description="Low complexity" evidence="5">
    <location>
        <begin position="340"/>
        <end position="353"/>
    </location>
</feature>
<feature type="modified residue" description="Phosphothreonine" evidence="9">
    <location>
        <position position="156"/>
    </location>
</feature>
<feature type="modified residue" description="Phosphoserine" evidence="2">
    <location>
        <position position="212"/>
    </location>
</feature>
<feature type="modified residue" description="Phosphoserine" evidence="2">
    <location>
        <position position="284"/>
    </location>
</feature>
<feature type="modified residue" description="Phosphothreonine" evidence="19">
    <location>
        <position position="302"/>
    </location>
</feature>
<feature type="modified residue" description="Phosphoserine" evidence="3">
    <location>
        <position position="304"/>
    </location>
</feature>
<feature type="modified residue" description="Phosphoserine" evidence="2">
    <location>
        <position position="307"/>
    </location>
</feature>
<feature type="modified residue" description="Phosphoserine" evidence="2">
    <location>
        <position position="308"/>
    </location>
</feature>
<feature type="modified residue" description="Phosphoserine" evidence="3">
    <location>
        <position position="310"/>
    </location>
</feature>
<feature type="modified residue" description="Phosphoserine" evidence="2">
    <location>
        <position position="438"/>
    </location>
</feature>
<feature type="modified residue" description="Phosphoserine" evidence="2">
    <location>
        <position position="459"/>
    </location>
</feature>
<feature type="sequence conflict" description="In Ref. 1; CAA52891." evidence="18" ref="1">
    <original>H</original>
    <variation>L</variation>
    <location>
        <position position="10"/>
    </location>
</feature>
<feature type="sequence conflict" description="In Ref. 4; AAA03606." evidence="18" ref="4">
    <original>G</original>
    <variation>S</variation>
    <location>
        <position position="434"/>
    </location>
</feature>
<name>FOXA2_MOUSE</name>
<keyword id="KW-0010">Activator</keyword>
<keyword id="KW-0156">Chromatin regulator</keyword>
<keyword id="KW-0963">Cytoplasm</keyword>
<keyword id="KW-0217">Developmental protein</keyword>
<keyword id="KW-0238">DNA-binding</keyword>
<keyword id="KW-0539">Nucleus</keyword>
<keyword id="KW-0597">Phosphoprotein</keyword>
<keyword id="KW-1185">Reference proteome</keyword>
<keyword id="KW-0804">Transcription</keyword>
<keyword id="KW-0805">Transcription regulation</keyword>